<reference key="1">
    <citation type="submission" date="2007-05" db="EMBL/GenBank/DDBJ databases">
        <title>Complete sequence of chromosome of Staphylococcus aureus subsp. aureus JH9.</title>
        <authorList>
            <consortium name="US DOE Joint Genome Institute"/>
            <person name="Copeland A."/>
            <person name="Lucas S."/>
            <person name="Lapidus A."/>
            <person name="Barry K."/>
            <person name="Detter J.C."/>
            <person name="Glavina del Rio T."/>
            <person name="Hammon N."/>
            <person name="Israni S."/>
            <person name="Pitluck S."/>
            <person name="Chain P."/>
            <person name="Malfatti S."/>
            <person name="Shin M."/>
            <person name="Vergez L."/>
            <person name="Schmutz J."/>
            <person name="Larimer F."/>
            <person name="Land M."/>
            <person name="Hauser L."/>
            <person name="Kyrpides N."/>
            <person name="Kim E."/>
            <person name="Tomasz A."/>
            <person name="Richardson P."/>
        </authorList>
    </citation>
    <scope>NUCLEOTIDE SEQUENCE [LARGE SCALE GENOMIC DNA]</scope>
    <source>
        <strain>JH9</strain>
    </source>
</reference>
<accession>A5ISW6</accession>
<protein>
    <recommendedName>
        <fullName>Extracellular matrix-binding protein ebh</fullName>
    </recommendedName>
    <alternativeName>
        <fullName>ECM-binding protein homolog</fullName>
    </alternativeName>
</protein>
<sequence>MNYRDKIQKFSIRKYTVGTFSTVIATLVFLGFNTSQAHAAETNQPASVVKQKQQSNNEQTENRESQVQNSQNSQNSQSLSATHENEQPNNSQANLVNQKVAQSSTTNDEQPASQNVNTKKDSATAATTQPDKEESKHKQNESQSANKNGNDNRAAHVENHEANVVTASDSSDNGNVQHDRNELQAFFDANYHDYRFIDRENADSGTFNYVKGIFDKINTLLGSNDPINNKDLQLAYKELEQAVALIRTMPQRQQTSRRSNRIQTRSVESRAAEPRSVSDYQNANSSYYVENANDGSGYPVGTYINASSKGAPYNLPTTPWNTLKASDSKEIALMTAKQTGDGYQWVIKFNKGHAPHQNMIFWFALPADQVPVGRTDFVTVNSDGTNVQWSHGAGAGANKPLQQMWEYGVNDPDRSHDFKIRNRSGQVIYSWPTVHVYSLEDLSRASDYFSEAGATPATKAFGRQNFEYINGQKPAESPGVPKVYTFIGQGDASYTISFKTQGPTVNKLYYAAGGRALEYNQLFMYSQLYVESTQDHQQRLNGLRQVVNRTYRIGTTKRVEVSQGNVQTKKVLESTNLNIDDFVDDPLSYVKTPSNKVLGFYPTNANTNAFRPGGVQELNEYQLSQLFTDQKLQEAARTRNPIRLMIGFDYPDGYGNSETLVPVNLTVLPEIQHNIKFFKNDDTQNIAEKPFSKQAGHPVFYVYAGNQGNASVNLGGSVTSIQPLRINLTSNENFTDKGWQITGIPRTLHIENSTNRTNNARERNIELVGNLLPGDYFGTIRFGRKEQLFEIRVKPHTPTITTTAEQLRGTALQKVPVNISGIPLDPSALVYLVAPTNQTTNGGSEADQIPSGYTILATGTPDGVHNTVTIRPQDYVVFIPPVGKQIRAVVYYNKVVASNMSNAVTILPDDIPPTINNPVGINAKYYRGDEVNFTMGVSDRHSGIKNTTITTLPSGWTSNLTKSDNKNGSLAITGRVSMNQAFNSDITFKVSATDNVNNTTNDSQSKHVSIHVGKISEDAHPIVLGNTEKVVVVNPTAVSNDEKQSIITAFMNKNQNIRGYLASTDPVTVDNNGNVTLHYRDGSSTTLDATNVMTYEPVVKSEYQTANAAKTATVTIAKGQSFNIGDIKQYFTLSNGQAIPNGTFTNITSDRTIPTAQEVSQMNAGTQLYHIVASNAYHKDTEDFYISLKIVDVKQPEGDQRVYRTSTYDLTTDEISKVKQAFINANRDVITLAEGDISVTNTPNGANVSTITVNINKGRLTKSFASNLANMNFLRWVNFPQDYTVTWTNAKIANRPTDGGLSWSDDHKSLIYRYDATLGTQITTNDILTMLKATTTVPGLRNNITGNEKAQAEAGGRPNYRTTGYSQSNATTDGQRQFTLNGQVIQILDIINPSNGYGGQPVTNSNTRANHSNSTVVNVNEPAANGAGAFTIDHVVKSNSTHNASDAVYKAQLYLTPYGPKQYVEHLNQNTGNTTDAINIYFVPSDLVNPTISVGNYTNHQVFSGETFTNTITANDNFGVQSVTVPNTSQITGTVDNNHQHVSATAPNVTSATSKTINLLATDTSGNTATTSFNVTVKPLRDKYRVGTSSTAANPVRIANISNNATVSQADQTTIINSLTFTSNAPNRNYATASANEITSKTVSNVSRTGNNANVTVTVTHQDGTTSTVTVPVKHVIPEIVAHSHYTVQGQDFPAGNGSSAADYFKLSNGSAIPDATITWVSGQAPNKDNTRIGEDITVTAHILIDGETTPITKTATYKVVRTVPKHVFETARGVLYPGVSDMYDAKQYVKPVNNSWSTNAQHMNFQFVGTYGPNKDVVGISTRLIRVTYDNRQTEDLTILSKVKPDPPRIDANSVTYKAGLTNQEIKVNNVLNNSSVKLFKADNTPLNVTNITHGSGFSSVVTVSDALPNGGIKAKSSISMNNVTYTTQDEHGQVVTVTRNESVDSNDSASVTVTPQLQATTEGAVFIKGGDGFDFGHVERFIQNPPHGATVAWHDSPDTWKNTVGNTHKTAVVTLPSGQGTRNVEVPVKVYPVANAKAPSRDVKGQNLTHGTNAIDYITFDPNTNTNGITAAWANRQQPNNQQAGVQHLNVDVTYPGISAAKRVPVTVNVYQFEFPQTTYTTTVGGTLASGTQASGYAHMQNASGLPTDGFTYKWNRDTTGTNDANWAAMNKPNTAQVVNAKYDVIYNGHTFATSLPAKFVVKDVQPAKPTVTETAAGAITIAPGANQTVNTHAGNVTTYADKLVIKRNGNVVTTFTRRNNTSPWVKEASADNVTGIVGTNNGITVAAGTFNPADTIQVVATQGSGETISDEQRSDDFTVVAPQPNQATTKIWQNGHIDITPNNPSGHLINPTQAMDIAYTEKVGNGAEHSKTINVVRGQNNQWTIANKPDYVTLDAQTGKVTFNANTIKPNSSITITPKAGTGHSVSSNPSTLTAPAAHTVNTTEIVKDYGSNVTAAEINNAVQVANKRTATIKNGTAMPTNLAGGSTTTIPVTVTYNDGSTEEVQESIFTKADKRELITAKNHLDDPVSTEGKKPGTITQYNNAMHNAQQQINTAKTEAQQVINNERATPQQVSDALTKVRAAQTKIDQAKALLQNKEDNSQLVTSKNNLQSSVNQVPSTAGMTQQSIDNYNAKKREAETEITAAQRVIDNGDATAQQISDEKHRVDNALTALNQAKHDLTADTHALEQAVQQLNRTGTTTGKKPASITAYNNSIRALQSDLTSAKNSANAIIQKPIRTVQEVQSALTNVNRVNERLTQAINQLVPLADNSALRTAKTKLDEEINKSVTTDGMTQSSIQAYENAKRAGQTETTNAQNVINNGDATDQQIAAEKTKVEEKYNSLKQAIAGLTPDLAPLQTAKTQLQNDIDQPTSTTGMTSASVAAFNDKLSAARTKIQEIDRVLASHPDVATIRQNVTAANAAKTALDQARNGLTVDKAPLENAKNQLQHSIDTQTSTTGMTQDSINAYNAKLTAARNKVQQINQVLAGSPTVDQINTNTSAANQAKSDLDHARQALTPDKAPLQNAKTQLEQSINQPTDTTGMTTASLNAYNQKLQAARQKLTEINQVLNGNPTVQNINDKVAEANQAKDQLNTARQGLTLDRQPALTTLHGASNLNQAQQNNFTQQINAAQNHAALETIKSNITALNTAMTKLKDSVADNNTIKSGQNYTDATPANKQAYDNAVNAAKGVIGETTNPTMDVNTVNQKAASVKSTKDALDGQQNLQRAKTEATNAITHASDLNQAQKNALTQQVNSAQNVQAVNDIKQTTQSLNTAMTGLKRGVANHNQVVQSDNYVNADTNKKNDYNNAYNHANDIINGNAQHPVITPSDVNNALSNVTSKEHALNGEAKLNAAKQEANTALGHLNNLNNVQRQNLQSQINGAHQIDAVNTIKQNATNLNSAMGNLRQAVADKDQVKRTEDYADADTAKQNAYNSAVSSAETIINQTANPTMSVDDVNRATSAVTTNKSALNGDEKLVQSKTDAARAIDALPHLNNAQKADVKSKINAASNIAGVNTVKQQGTDLNTAMGNLQGAINDEQTTLNSQNYQDATPSKKTAYTNAVQAAKDILNKSNGQNKTKDQVTEAMNQVNSAKNNLDGTRLLDQAKQTAKQQLNNMTHLTTAQKTNLTNQINSGTTVAGVHTVQSNANTLDQAMNTLRQSIANNDATKASEDYVDANNDKQTAYNNAVAAAETIINANSNPEMNPSTITQKAEQVNSSKTALNGDENLATAKQNAKTYLNTLTSITDAQKNNLISQISSATRVSGVDTVKQNAQHLDQAMANLQNGINNESQVKSSEKYRDADTNKQQEYDNAITAAKAILNKSTGPNTAQNAVEAALQRVNTAKDALNGDAKLIAAQNAAKQHLGTLTHITTAQRNDLTNQISQATNLAGVESVKQSANSLDGAMGNLQTAINDKSGTLASQNFLDADEQKRNAYNQAISAAETILNKQTGPNTAKTAVEQALNNVNSAKHALNGTQNLNNAKQAAITAINGASDLNQKQKDALKAQANGAQRVSNANDVQRNATELNTAMGQLQHAIADKTNTLASSKYVNADSTKQNAYTTKVTNAEHIISGTPTVVTTPSEVTAAANQVNSAKQELNGDERLRVAKQNANTAIDALTQLNTPQKAKLKEQVGQANRLEDVQSVQTNGQSLNNAMKGLRYSIANETTVKASQNYTDASPNNQSTYNSAVSNAKGIINQTNNPTMDTSAITQATTQVNNAKNGLNGAENLRNAQNTAKQNLNTLSHLTNNQKSAISSQIDRAGHVSEVTAAKNAATELNAQMGNLEQAIHDQNTVKQGVNFTDADKAKRDAYTNAVSRAETILNKTQGANTSKQDVEAAIQNVTSAKNALNGDQNVTNAKNAAKNALNNLTSINNAQKRDLTTKIDQATTVAGVEAVSNTGTQLNTAMANLQNGINDKANTLASENYHDADSDKKTAYTQAVTNAENILNKNSGSNLDKAAVENALSQVTNAKGALNGNHNLEQAKSNANTTINGLQHLTTAQKDKLKQQVQQAQNVAGVDTVKSSANTLNGAMGTLRNSIQDNTATKNGQNYLDATERNKTNYNNAVDSANGVINATSNPNMDANAINQIATQVTSTKNALDGTHNLTQAKQTATNAIDGATNLNKAQKDALKAQVTSAQRVANVTSIQQTANELNTAMGQLQHGIDDENATKQTQKYRDAEQSKKTAYDQAVAAAKAILNKQTGSNSDKAAVDRALQQVTSTKDALNGDAKLAEAKAAARQNLGTLNHITNAQRTALEGQINQATTVDGVNTVKTNANTLDGAMNSLQGAINDKDATLRNQNYLDADESKRNAYTQAVTAAEGILNKQTGGNTSKADVDNALNAVTRAKAALNGAENLRNAKTSATNTINGLPNLTQLQKDNLKHQVEQAQNVVGVNGVKDKGNTLNTAMGALRTSIQNDNTTKTSQNYLDASDSNKNNYNTAVNNANGVINATNNPNMDANAINDMANQVNTTKAALNGAQNLAQAKTNATNTINNAQDLNQKQKDALKTQVNNAQRVSDANNVQHTATELNGAMTALKAAIADKERTKASGNYVNADQEKRQAYDSKVTNAENIINGTPNATLTVNDVNSAASQVNAAKTALNGDNNLRVAKEHANNTIDGLAQLNNVQKAKLKEQVQSATTLDGVQTVKNSSQTLNTAMKGLRDSIANEATIKAGQNYTDASPNNRNEYDSAVTAAKAIINQTSNPTMEPNTITQATSQVTTKEHALNGAQNLAQAKTTAKNNLNNLTSINNAQKDALTRNIDGATTVAGVNQETAKATELNNAMHSLQNGINDETQTKQTQKYLDAEPSKKSAYDQAVNAAKAILTKASGQNVDKAAVEQALQNVNSTKTALNGDAKLNEAKAAAKQTLGTLTHINNAQRNALDNEITQATNVEGVNTVKAKAQQLDGAMGQLETSIRDKDTTLQSQNYQDADDAKRTAYSQAVNAAATILNKTAGGNTPKADVERAMQAVTQANTALNGIQNLERAKQAANTAITNASDLNTKQKEALKAQVTSAGRVSAANGVEHTATELNTAMTALKRAIADKADTKASGNYVNADANKRQAYDEKVTAAEHIVSGTPTPTLTPSDVTNAATQVTNAKTQLNGNHNLEVAKQNANTAIDGLTSLNGPQKAKLKEQVGQATTLPNVQTVRDNAQTLNTAMKGLRDSIANEATIKAGQNYTDASQNKQNDYNNAVTAAKAIIGQTTSPSMIAQEINQAKDQVTAKQQALNGQENLRTAQTNAKQHLNGLSDLTNAQKDAAKRQIEGATHVNEVTQAQNNADALNTAMTNLKNGIQDQNTIKQGVNFTDADEAKRNAYTNAVTQAEQILNKAQGPNTAKDGVETALQNVQRAKNELNGNQNVANAKTTAKNALNNLTSINNAQKAALKSQIEGATTVAGVNQVSTMASELNTAMSNLQRGINDEAATKAAQKYTEADRDKQTAYNDAVTAAKTLLDKTAGSNDNKVAVEQALQRVNTAKTALNGDARLNEAKNTAKQQLATMSHLTNAQKANLTEQIERGTTVAGVQGIQANAGTLNQAMNQLRQSIASKDATKSSEDYQDANADLQNAYNDAVTNAEGIISATNNPEMNPDTINQKASQVNSAKSALNGDEKLAAAKQTAKSDIGRLTDLNNAQRTAANAEVDQAPNLAAVTAAKNKATSLNTAMGNLKHALAEKDNTKRSVNYTDADQPKQQAYDTAVTQAEAITNANGSNANETQVQAALNQLNQAKNDLNGDNKVAQAKETAKRALASYSNLNNAQSTAATSQIDNATTVADVTAAQNTANELNTAMGQLQNGINDQNTVKQQVNFTDADQGKKDAYTNAVTNAQGILDKANGQNMTKAQVEAALNQVTTAKNALNGDANVRQAKSDAKANLGTLTHLNNAQKQDLTSQIEGATTVNGVNSVKTKAQDLDGAMQRLESAIANKDQTKASENYIDADPTKKTAFDNAITQAESYLNKDHGTNKDKQAVEQAIQSVTSTENALNGDANLQCAKTEATQAIDNLTQLNTPQKTALKQQVNAAQRVSGVTDLKNSATSLNNAMDQLKQAIGDHDTIVAGGNYTNASPDKQGAYTDAYNAAKNIVNGSPNVITNAADVTAATQRVNNAETSLNGDTNLATAKQQAKDALRQMTHLSDAQKQSITGQIDSATQVTGVQSVKDNATNLDNAMNQLRNSIANKDEVKASQPYVDADTDKQNAYNTAVTSAENIINATSQPTLDPSAVTQAANQVNTNKTALNGAQNLANKKQETTANINRLSHLNNAQKQDLNTQVTNAPNISTVNQVKTKAEQLDQAMERLINGIQDKDQVKQSVNFTDADPEKQTAYNNAVTAAENIINQANGTNANQSQVEAALSTVTTTKQALNGDRKVTDAKNNANQTLSTLDNLNNAQKGAVTGNINQAHTVAEVTQAIQTAQELNTAMGNLKNSLNDKDTTLGSQNFADADPEKKNAYNEAVRNAENILNKSTGTNVPKDQVEAAMNQVNTTKAALNGTQNLEKAKQHANTAIDGLSHLTNAQKEALKQLVQQSTTVAEAQGNEQKANNVDAAMDKLRQSIADNATTKQNQNYTDASPNKKDAYNNAVTTAQGIIDQTTNPSLDPTVINQAAGQVSTSKNALNGNENLEAAKQQATQSLGSLDNLNNAQKQAVTNQINGAHTVDEANQIKQNAQNLNTAMGNLKQAIADKDATKATVNFTDADQAKQQAYNTAVTNAENIISKANGGNATQTEVEQAIQQVNAAKQALNGNANVQHAKDEATALINNSNDLNQAQKDALKQQVQNATTVAGVNNVKQTAQELNNAMTQLKQGIADKEQTKADGNFVNADSDKQNAYNQAVAKAEALISGTPDVVVTPSEITAALNKVTQAKNDLNGNTNLATAKQNVQHAIDQLPNLNQAQRDEYSKQITQATLVPNVNAIQQAATTLNDAMTQLKQGIANKAQIKGSENYHDADTDKQTAYDNAVTKAEELLKQTTNPTMDPNTIQQALTKVNDTNQALNGNQKLADAKQDAKTTLGTLDHLNDAQKQALTTQVEQAPDIATVNNVKQNAQNLNNAMTNLNNALQDKTETLNSINFTDADQAKKDDYTNAVSHAEGILSKANGSNASQTEVEQAMQRVNEAKQALNGNDNVQRAKDAAKQVITNANDLNQAQKDALKQQVDAAQTVANVNTIKQTAQDLNQAMTQLKQGIADKDQTKANGNFVNADTDKQNAYNNAVAHAEQIISGTPNANVDPQQVAQALQQVNQAKGDLNGNHNLQVAKDNANTAIDQLPNLNQPQKTALKDQVSHAELVTGVNAIKQNADALNNAMGTLKQQIQANSQVPQSVDFTQADQDKQQAYNNAANQAQQIANGTPTPVLAPDTVTKAVTTMNQAKDALNGDEKLAQAKQDALANLDTLRDLNQPQRDALRNQINQAQALATVEQTKQNAQNVNTAMGNLKQGIANKDTVKASENYHDADVDKQTAYTNAVSQAEGIINQTTNPTLNPDDITRALTQVTDAKNSLNGEAKLATEKQNAKDAVSGMTHLNDAQKQALKGQIDQSPEIATVNQVKQTATSLDQAMDQLSQAINDKDQILADGNYLNADPDKQNAYKQAVAKAEALLNKQSGTNEVQAQVESITNEVNAAKQALNGNDNLANAKQQAKQQLANLTHLNDAQKQSFESQITQAPLVTDVTTINQKAQTLDHAMELLRNSVADNQTTLASEDYHDATAQRQNDYNKAVTAANNIINQTTSPTMNPDDVNGATTQVNNTKVALDGDENLAAAKQQANNRLDQLDHLNNAQKQQLQSQITQSSDIAAVNGHKQTAESLNTAMGNLINAIADHQAVEQRGNFINADTDKQTAYNTAVNEAAAMINKQTGQNANQTEVEQAITKVQTTLQALNGDHNLQVAKTNATQAIDALTSLNDPQKTALKDQVTAATLVTAVHQIEQNANTLNQAMHGLRQSIQDNAATKANSKYINEDQPEQQNYDQAVQAANNIINEQTATLDNNAINQVAATVNTTKAALHGDVKLQNDKDHAKQTVSQLAHLNNAQKHMEDTLIDSETTRTAVKQDLTEVQALDQLMDALQQSIADKDATRASSAYVNAEPNKKQAYDEAVQNAESIIAGLNNPTINKGNVSSATQAVISSKNALDGVERLAQDKQTAGNSLNHLDQLTPAQQQALENQINNATTRDKVAEIIAQAQALNEAMKALKESIKDQPQTEASSKFINEDQAQKDAYTQAVQHAKDLINKTTDPTLAKSIIDQATQAVTDAKNNLHGDQKLAQDKQRATETLNNLSNLNTPQRQALENQINNAATRGEVAQKLTEAQALNQAMEALRNSIQDQQQTESGSKFINEDKPQKDAYQAAVQNAKDLINQTGNPTLDKAQVEQLTHAFKQAKDNLHGDQKLADDKQHAVTDLNQLNGLNNPQRQALESQINNAATRGEVAQKLAEAKALDQAMQALRNSIQDQQQTEAGSKFINEDKPQKDAYQAAVQNAKDLINQTGNPTLDKSQVEQLTQAVTTAKDNLHGDQKLARDQQQAVTTVNALPNLNHAQQQTLTDAINAAPTRTEVAQHVQTATELDHAMETLKNKVDQVNTDKAQPNYTEASTDKKEAVDQALQAAQSITDPTNGSNANKDAVEQALTKLQEKVNELNGNERVAEAKTQAKQTIDQLTHLNADQIATAKQNIDQATKLQPIAELVDQATQLNQSMDQLQQAVNEHANVEQTIDYTQADSDKQKAYKQAIADAENVLKQNANKQQVDQALQNILNAKQALNGDERVALAKTNGKHDIDQLNALNNAQQDGFKGRIDQSNDLNQIQQIVDEAKALNRAMDQLSQEITGNEGRTKGSTNYVNADTQVKQVYDEAVDKAKQALDKSSGQNLTAEQVIKLNDAVTAAKKALNGEERLNNRKAEALQRLDQLTHLNNAQRQLAIQQINNAETLNKASRAINRATKLDNAMGAVQQYIDEQHLGVISSTNYINADDNLKANYDNAIANAAHELDKVQGNAIAKAEAEQLKQNIIDAQNALNGDQNLANAKDKANAFVNSLNGLNQQQQDLAHKAINNADTVSDVTDIVNNQIDLNDAMETLKHLVDNEIPNAEQTVNYQNADDNAKTNFDDAKRLANTLLNSDNTNVNDINGAIQAVNDAIHNLNGDQRLQDAKDKAIQSINQALANKLKEIEASNATDQDKLIAKNKAEELANSIINNINKATSNQAVSQVQTAGNHAIEQVHANEIPKAKIDANKDVDKQVQALIDEIDRNPNLTDKEKQALKDRINQILQQGHNDINNALTKEEIEQAKAQLAQALQDIKDLVKAKEDAKQDVDKQVQALIDEIDQNPNLTDKEKQALKDRINQILQQGHNGINNAMTKEEIEQAKAQLAQALKEIKDLVKAKENAKQDVDKQVQALIDEIDQNPNLTDKEKQALKDRINQILQQGHNDINNAMTKEEIEQAKAQLAQALQDIKDLVKAKEDAKNAIKALANAKRDQINSNPDLTPEQKAKALKEIDEAEKRALQNVENAQTIDQLNRGLNLGLDDIRNTHVWEVDEQPAVNEIFEATPEQILVNGELIVHRDDIITEQDILAHINLIDQLSAEVIDTPSTATISDSLTAKVEVTLLDGSKVIVNVPVKVVEKELSVVKQQAIESIENAAQQKIDEINNSVTLTLEQKEAAIAEVNKLKQQAIDHVNNAPDVHSVEEIQQQEQAYIEQFNPEQFTIEQAKSNAIKSIEDAIQHMIDEIKARTDLTDKEKQEAIAKLNQLKEQAIQAIQRAQSISEITEQLEQFKAQMKAANPTAKELAKRKQEAISRIKDFSNEKINSIRNSEIGTADEKQAAMNQINEIVLETIRDINNAHTLQQVEAALNNGIARISAVQIVISDRAKQSSSTGNESNSHLTIGYGTANHPFNSSTIGHKKKLDEDDDIDPLHMRHFSNNFGNVIKNAIGVVGISGLLASFWFFIAKRRRKEDEEEELEIRDNNKDSIKETLDDTKHLPLLFAKRRRKEDEEDVTVEEKDSLNNGESLDKVKHTPFFLPKRRRKEDEEDVEVTNENTDEKVLKDNEHSPLLFAKRRKDKEEDVETTTSIESKDEDVPLLLAKKKNQKDNQSKDKKSASKNTSKKVAAKKKKKKSKKNKK</sequence>
<keyword id="KW-1003">Cell membrane</keyword>
<keyword id="KW-0472">Membrane</keyword>
<keyword id="KW-0677">Repeat</keyword>
<keyword id="KW-0732">Signal</keyword>
<keyword id="KW-0812">Transmembrane</keyword>
<keyword id="KW-1133">Transmembrane helix</keyword>
<proteinExistence type="inferred from homology"/>
<name>EBH_STAA9</name>
<gene>
    <name type="primary">ebh</name>
    <name type="ordered locus">SaurJH9_1495</name>
</gene>
<evidence type="ECO:0000255" key="1"/>
<evidence type="ECO:0000256" key="2">
    <source>
        <dbReference type="SAM" id="MobiDB-lite"/>
    </source>
</evidence>
<evidence type="ECO:0000305" key="3"/>
<dbReference type="EMBL" id="CP000703">
    <property type="protein sequence ID" value="ABQ49289.1"/>
    <property type="molecule type" value="Genomic_DNA"/>
</dbReference>
<dbReference type="RefSeq" id="WP_001109369.1">
    <property type="nucleotide sequence ID" value="NC_009487.1"/>
</dbReference>
<dbReference type="SMR" id="A5ISW6"/>
<dbReference type="KEGG" id="saj:SaurJH9_1495"/>
<dbReference type="HOGENOM" id="CLU_222673_0_0_9"/>
<dbReference type="GO" id="GO:0005886">
    <property type="term" value="C:plasma membrane"/>
    <property type="evidence" value="ECO:0007669"/>
    <property type="project" value="UniProtKB-SubCell"/>
</dbReference>
<dbReference type="Gene3D" id="3.10.20.890">
    <property type="match status" value="1"/>
</dbReference>
<dbReference type="Gene3D" id="1.20.120.1850">
    <property type="entry name" value="Ebh helix bundles repeating unit (S and A modules)"/>
    <property type="match status" value="8"/>
</dbReference>
<dbReference type="Gene3D" id="1.20.5.420">
    <property type="entry name" value="Immunoglobulin FC, subunit C"/>
    <property type="match status" value="90"/>
</dbReference>
<dbReference type="InterPro" id="IPR011439">
    <property type="entry name" value="DUF1542"/>
</dbReference>
<dbReference type="InterPro" id="IPR026361">
    <property type="entry name" value="Ebh_dom"/>
</dbReference>
<dbReference type="InterPro" id="IPR051197">
    <property type="entry name" value="ECM-binding_protein"/>
</dbReference>
<dbReference type="InterPro" id="IPR020840">
    <property type="entry name" value="Extracell_matrix-bd_GA"/>
</dbReference>
<dbReference type="InterPro" id="IPR002988">
    <property type="entry name" value="GA_module"/>
</dbReference>
<dbReference type="InterPro" id="IPR009063">
    <property type="entry name" value="Ig/albumin-bd_sf"/>
</dbReference>
<dbReference type="InterPro" id="IPR005877">
    <property type="entry name" value="YSIRK_signal_dom"/>
</dbReference>
<dbReference type="NCBIfam" id="TIGR04264">
    <property type="entry name" value="hyperosmo_Ebh"/>
    <property type="match status" value="1"/>
</dbReference>
<dbReference type="NCBIfam" id="TIGR01168">
    <property type="entry name" value="YSIRK_signal"/>
    <property type="match status" value="1"/>
</dbReference>
<dbReference type="PANTHER" id="PTHR33150">
    <property type="entry name" value="EXTRACELLULAR MATRIX-BINDING PROTEIN EBH"/>
    <property type="match status" value="1"/>
</dbReference>
<dbReference type="PANTHER" id="PTHR33150:SF1">
    <property type="entry name" value="EXTRACELLULAR MATRIX-BINDING PROTEIN EBH"/>
    <property type="match status" value="1"/>
</dbReference>
<dbReference type="Pfam" id="PF07564">
    <property type="entry name" value="DUF1542"/>
    <property type="match status" value="8"/>
</dbReference>
<dbReference type="Pfam" id="PF07554">
    <property type="entry name" value="FIVAR"/>
    <property type="match status" value="52"/>
</dbReference>
<dbReference type="Pfam" id="PF01468">
    <property type="entry name" value="GA"/>
    <property type="match status" value="11"/>
</dbReference>
<dbReference type="Pfam" id="PF04650">
    <property type="entry name" value="YSIRK_signal"/>
    <property type="match status" value="1"/>
</dbReference>
<dbReference type="SMART" id="SM00844">
    <property type="entry name" value="GA"/>
    <property type="match status" value="53"/>
</dbReference>
<dbReference type="SUPFAM" id="SSF46997">
    <property type="entry name" value="Bacterial immunoglobulin/albumin-binding domains"/>
    <property type="match status" value="103"/>
</dbReference>
<comment type="subcellular location">
    <subcellularLocation>
        <location evidence="3">Cell membrane</location>
        <topology evidence="3">Single-pass membrane protein</topology>
    </subcellularLocation>
</comment>
<feature type="signal peptide" evidence="1">
    <location>
        <begin position="1"/>
        <end position="39"/>
    </location>
</feature>
<feature type="chain" id="PRO_5000247291" description="Extracellular matrix-binding protein ebh">
    <location>
        <begin position="40"/>
        <end position="10624"/>
    </location>
</feature>
<feature type="transmembrane region" description="Helical" evidence="1">
    <location>
        <begin position="10430"/>
        <end position="10450"/>
    </location>
</feature>
<feature type="domain" description="FIVAR 1">
    <location>
        <begin position="2524"/>
        <end position="2580"/>
    </location>
</feature>
<feature type="domain" description="FIVAR 2">
    <location>
        <begin position="2610"/>
        <end position="2666"/>
    </location>
</feature>
<feature type="domain" description="FIVAR 3">
    <location>
        <begin position="2687"/>
        <end position="2750"/>
    </location>
</feature>
<feature type="domain" description="FIVAR 4">
    <location>
        <begin position="2780"/>
        <end position="2836"/>
    </location>
</feature>
<feature type="domain" description="FIVAR 5">
    <location>
        <begin position="2864"/>
        <end position="2919"/>
    </location>
</feature>
<feature type="domain" description="FIVAR 6">
    <location>
        <begin position="2947"/>
        <end position="3002"/>
    </location>
</feature>
<feature type="domain" description="FIVAR 7">
    <location>
        <begin position="3030"/>
        <end position="3085"/>
    </location>
</feature>
<feature type="domain" description="FIVAR 8">
    <location>
        <begin position="3154"/>
        <end position="3212"/>
    </location>
</feature>
<feature type="domain" description="FIVAR 9">
    <location>
        <begin position="3280"/>
        <end position="3339"/>
    </location>
</feature>
<feature type="domain" description="FIVAR 10">
    <location>
        <begin position="3407"/>
        <end position="3465"/>
    </location>
</feature>
<feature type="domain" description="FIVAR 11">
    <location>
        <begin position="3533"/>
        <end position="3591"/>
    </location>
</feature>
<feature type="domain" description="FIVAR 12">
    <location>
        <begin position="3659"/>
        <end position="3717"/>
    </location>
</feature>
<feature type="domain" description="FIVAR 13">
    <location>
        <begin position="3785"/>
        <end position="3843"/>
    </location>
</feature>
<feature type="domain" description="FIVAR 14">
    <location>
        <begin position="3911"/>
        <end position="3969"/>
    </location>
</feature>
<feature type="domain" description="FIVAR 15">
    <location>
        <begin position="4037"/>
        <end position="4095"/>
    </location>
</feature>
<feature type="domain" description="FIVAR 16">
    <location>
        <begin position="4163"/>
        <end position="4221"/>
    </location>
</feature>
<feature type="domain" description="FIVAR 17">
    <location>
        <begin position="4289"/>
        <end position="4347"/>
    </location>
</feature>
<feature type="domain" description="FIVAR 18">
    <location>
        <begin position="4415"/>
        <end position="4473"/>
    </location>
</feature>
<feature type="domain" description="FIVAR 19">
    <location>
        <begin position="4541"/>
        <end position="4599"/>
    </location>
</feature>
<feature type="domain" description="FIVAR 20">
    <location>
        <begin position="4667"/>
        <end position="4725"/>
    </location>
</feature>
<feature type="domain" description="FIVAR 21">
    <location>
        <begin position="4793"/>
        <end position="4851"/>
    </location>
</feature>
<feature type="domain" description="FIVAR 22">
    <location>
        <begin position="4919"/>
        <end position="4977"/>
    </location>
</feature>
<feature type="domain" description="FIVAR 23">
    <location>
        <begin position="5045"/>
        <end position="5103"/>
    </location>
</feature>
<feature type="domain" description="FIVAR 24">
    <location>
        <begin position="5171"/>
        <end position="5229"/>
    </location>
</feature>
<feature type="domain" description="FIVAR 25">
    <location>
        <begin position="5297"/>
        <end position="5355"/>
    </location>
</feature>
<feature type="domain" description="FIVAR 26">
    <location>
        <begin position="5423"/>
        <end position="5481"/>
    </location>
</feature>
<feature type="domain" description="FIVAR 27">
    <location>
        <begin position="5549"/>
        <end position="5607"/>
    </location>
</feature>
<feature type="domain" description="FIVAR 28">
    <location>
        <begin position="5675"/>
        <end position="5733"/>
    </location>
</feature>
<feature type="domain" description="FIVAR 29">
    <location>
        <begin position="5801"/>
        <end position="5859"/>
    </location>
</feature>
<feature type="domain" description="FIVAR 30">
    <location>
        <begin position="6053"/>
        <end position="6111"/>
    </location>
</feature>
<feature type="domain" description="FIVAR 31">
    <location>
        <begin position="6179"/>
        <end position="6236"/>
    </location>
</feature>
<feature type="domain" description="FIVAR 32">
    <location>
        <begin position="6304"/>
        <end position="6362"/>
    </location>
</feature>
<feature type="domain" description="FIVAR 33">
    <location>
        <begin position="6430"/>
        <end position="6488"/>
    </location>
</feature>
<feature type="domain" description="FIVAR 34">
    <location>
        <begin position="6556"/>
        <end position="6614"/>
    </location>
</feature>
<feature type="domain" description="FIVAR 35">
    <location>
        <begin position="6682"/>
        <end position="6740"/>
    </location>
</feature>
<feature type="domain" description="FIVAR 36">
    <location>
        <begin position="6808"/>
        <end position="6866"/>
    </location>
</feature>
<feature type="domain" description="FIVAR 37">
    <location>
        <begin position="6934"/>
        <end position="6992"/>
    </location>
</feature>
<feature type="domain" description="FIVAR 38">
    <location>
        <begin position="7060"/>
        <end position="7118"/>
    </location>
</feature>
<feature type="domain" description="FIVAR 39">
    <location>
        <begin position="7186"/>
        <end position="7244"/>
    </location>
</feature>
<feature type="domain" description="FIVAR 40">
    <location>
        <begin position="7312"/>
        <end position="7370"/>
    </location>
</feature>
<feature type="domain" description="FIVAR 41">
    <location>
        <begin position="7438"/>
        <end position="7496"/>
    </location>
</feature>
<feature type="domain" description="FIVAR 42">
    <location>
        <begin position="7564"/>
        <end position="7622"/>
    </location>
</feature>
<feature type="domain" description="FIVAR 43">
    <location>
        <begin position="7690"/>
        <end position="7748"/>
    </location>
</feature>
<feature type="domain" description="FIVAR 44">
    <location>
        <begin position="7816"/>
        <end position="7874"/>
    </location>
</feature>
<feature type="domain" description="FIVAR 45">
    <location>
        <begin position="7942"/>
        <end position="8000"/>
    </location>
</feature>
<feature type="domain" description="FIVAR 46">
    <location>
        <begin position="8068"/>
        <end position="8129"/>
    </location>
</feature>
<feature type="domain" description="FIVAR 47">
    <location>
        <begin position="8194"/>
        <end position="8252"/>
    </location>
</feature>
<feature type="domain" description="FIVAR 48">
    <location>
        <begin position="8320"/>
        <end position="8378"/>
    </location>
</feature>
<feature type="domain" description="FIVAR 49">
    <location>
        <begin position="8446"/>
        <end position="8503"/>
    </location>
</feature>
<feature type="domain" description="FIVAR 50">
    <location>
        <begin position="8571"/>
        <end position="8629"/>
    </location>
</feature>
<feature type="domain" description="FIVAR 51">
    <location>
        <begin position="8697"/>
        <end position="8755"/>
    </location>
</feature>
<feature type="domain" description="FIVAR 52">
    <location>
        <begin position="8823"/>
        <end position="8881"/>
    </location>
</feature>
<feature type="domain" description="FIVAR 53">
    <location>
        <begin position="8949"/>
        <end position="9007"/>
    </location>
</feature>
<feature type="domain" description="FIVAR 54">
    <location>
        <begin position="9075"/>
        <end position="9133"/>
    </location>
</feature>
<feature type="domain" description="FIVAR 55">
    <location>
        <begin position="9201"/>
        <end position="9255"/>
    </location>
</feature>
<feature type="domain" description="FIVAR 56">
    <location>
        <begin position="9323"/>
        <end position="9382"/>
    </location>
</feature>
<feature type="domain" description="FIVAR 57">
    <location>
        <begin position="9577"/>
        <end position="9633"/>
    </location>
</feature>
<feature type="region of interest" description="Disordered" evidence="2">
    <location>
        <begin position="41"/>
        <end position="152"/>
    </location>
</feature>
<feature type="region of interest" description="Disordered" evidence="2">
    <location>
        <begin position="250"/>
        <end position="277"/>
    </location>
</feature>
<feature type="region of interest" description="Disordered" evidence="2">
    <location>
        <begin position="1347"/>
        <end position="1372"/>
    </location>
</feature>
<feature type="region of interest" description="Disordered" evidence="2">
    <location>
        <begin position="2418"/>
        <end position="2438"/>
    </location>
</feature>
<feature type="region of interest" description="Disordered" evidence="2">
    <location>
        <begin position="10527"/>
        <end position="10624"/>
    </location>
</feature>
<feature type="compositionally biased region" description="Polar residues" evidence="2">
    <location>
        <begin position="41"/>
        <end position="59"/>
    </location>
</feature>
<feature type="compositionally biased region" description="Low complexity" evidence="2">
    <location>
        <begin position="65"/>
        <end position="78"/>
    </location>
</feature>
<feature type="compositionally biased region" description="Polar residues" evidence="2">
    <location>
        <begin position="79"/>
        <end position="117"/>
    </location>
</feature>
<feature type="compositionally biased region" description="Basic and acidic residues" evidence="2">
    <location>
        <begin position="130"/>
        <end position="140"/>
    </location>
</feature>
<feature type="compositionally biased region" description="Polar residues" evidence="2">
    <location>
        <begin position="141"/>
        <end position="151"/>
    </location>
</feature>
<feature type="compositionally biased region" description="Polar residues" evidence="2">
    <location>
        <begin position="250"/>
        <end position="266"/>
    </location>
</feature>
<feature type="compositionally biased region" description="Polar residues" evidence="2">
    <location>
        <begin position="1360"/>
        <end position="1372"/>
    </location>
</feature>
<feature type="compositionally biased region" description="Polar residues" evidence="2">
    <location>
        <begin position="2427"/>
        <end position="2438"/>
    </location>
</feature>
<feature type="compositionally biased region" description="Basic and acidic residues" evidence="2">
    <location>
        <begin position="10542"/>
        <end position="10552"/>
    </location>
</feature>
<feature type="compositionally biased region" description="Basic and acidic residues" evidence="2">
    <location>
        <begin position="10591"/>
        <end position="10601"/>
    </location>
</feature>
<feature type="compositionally biased region" description="Basic residues" evidence="2">
    <location>
        <begin position="10606"/>
        <end position="10624"/>
    </location>
</feature>
<organism>
    <name type="scientific">Staphylococcus aureus (strain JH9)</name>
    <dbReference type="NCBI Taxonomy" id="359786"/>
    <lineage>
        <taxon>Bacteria</taxon>
        <taxon>Bacillati</taxon>
        <taxon>Bacillota</taxon>
        <taxon>Bacilli</taxon>
        <taxon>Bacillales</taxon>
        <taxon>Staphylococcaceae</taxon>
        <taxon>Staphylococcus</taxon>
    </lineage>
</organism>